<organism>
    <name type="scientific">Shewanella putrefaciens (strain CN-32 / ATCC BAA-453)</name>
    <dbReference type="NCBI Taxonomy" id="319224"/>
    <lineage>
        <taxon>Bacteria</taxon>
        <taxon>Pseudomonadati</taxon>
        <taxon>Pseudomonadota</taxon>
        <taxon>Gammaproteobacteria</taxon>
        <taxon>Alteromonadales</taxon>
        <taxon>Shewanellaceae</taxon>
        <taxon>Shewanella</taxon>
    </lineage>
</organism>
<comment type="function">
    <text evidence="1">Joins adenosylcobinamide-GDP and alpha-ribazole to generate adenosylcobalamin (Ado-cobalamin). Also synthesizes adenosylcobalamin 5'-phosphate from adenosylcobinamide-GDP and alpha-ribazole 5'-phosphate.</text>
</comment>
<comment type="catalytic activity">
    <reaction evidence="1">
        <text>alpha-ribazole + adenosylcob(III)inamide-GDP = adenosylcob(III)alamin + GMP + H(+)</text>
        <dbReference type="Rhea" id="RHEA:16049"/>
        <dbReference type="ChEBI" id="CHEBI:10329"/>
        <dbReference type="ChEBI" id="CHEBI:15378"/>
        <dbReference type="ChEBI" id="CHEBI:18408"/>
        <dbReference type="ChEBI" id="CHEBI:58115"/>
        <dbReference type="ChEBI" id="CHEBI:60487"/>
        <dbReference type="EC" id="2.7.8.26"/>
    </reaction>
</comment>
<comment type="catalytic activity">
    <reaction evidence="1">
        <text>alpha-ribazole 5'-phosphate + adenosylcob(III)inamide-GDP = adenosylcob(III)alamin 5'-phosphate + GMP + H(+)</text>
        <dbReference type="Rhea" id="RHEA:23560"/>
        <dbReference type="ChEBI" id="CHEBI:15378"/>
        <dbReference type="ChEBI" id="CHEBI:57918"/>
        <dbReference type="ChEBI" id="CHEBI:58115"/>
        <dbReference type="ChEBI" id="CHEBI:60487"/>
        <dbReference type="ChEBI" id="CHEBI:60493"/>
        <dbReference type="EC" id="2.7.8.26"/>
    </reaction>
</comment>
<comment type="cofactor">
    <cofactor evidence="1">
        <name>Mg(2+)</name>
        <dbReference type="ChEBI" id="CHEBI:18420"/>
    </cofactor>
</comment>
<comment type="pathway">
    <text evidence="1">Cofactor biosynthesis; adenosylcobalamin biosynthesis; adenosylcobalamin from cob(II)yrinate a,c-diamide: step 7/7.</text>
</comment>
<comment type="subcellular location">
    <subcellularLocation>
        <location evidence="1">Cell inner membrane</location>
        <topology evidence="1">Multi-pass membrane protein</topology>
    </subcellularLocation>
</comment>
<comment type="similarity">
    <text evidence="1">Belongs to the CobS family.</text>
</comment>
<accession>A4Y9P2</accession>
<evidence type="ECO:0000255" key="1">
    <source>
        <dbReference type="HAMAP-Rule" id="MF_00719"/>
    </source>
</evidence>
<feature type="chain" id="PRO_1000045806" description="Adenosylcobinamide-GDP ribazoletransferase">
    <location>
        <begin position="1"/>
        <end position="262"/>
    </location>
</feature>
<feature type="transmembrane region" description="Helical" evidence="1">
    <location>
        <begin position="43"/>
        <end position="63"/>
    </location>
</feature>
<feature type="transmembrane region" description="Helical" evidence="1">
    <location>
        <begin position="66"/>
        <end position="86"/>
    </location>
</feature>
<feature type="transmembrane region" description="Helical" evidence="1">
    <location>
        <begin position="120"/>
        <end position="140"/>
    </location>
</feature>
<feature type="transmembrane region" description="Helical" evidence="1">
    <location>
        <begin position="146"/>
        <end position="166"/>
    </location>
</feature>
<feature type="transmembrane region" description="Helical" evidence="1">
    <location>
        <begin position="191"/>
        <end position="211"/>
    </location>
</feature>
<feature type="transmembrane region" description="Helical" evidence="1">
    <location>
        <begin position="242"/>
        <end position="262"/>
    </location>
</feature>
<proteinExistence type="inferred from homology"/>
<name>COBS_SHEPC</name>
<dbReference type="EC" id="2.7.8.26" evidence="1"/>
<dbReference type="EMBL" id="CP000681">
    <property type="protein sequence ID" value="ABP76675.1"/>
    <property type="molecule type" value="Genomic_DNA"/>
</dbReference>
<dbReference type="STRING" id="319224.Sputcn32_2960"/>
<dbReference type="KEGG" id="spc:Sputcn32_2960"/>
<dbReference type="eggNOG" id="COG0368">
    <property type="taxonomic scope" value="Bacteria"/>
</dbReference>
<dbReference type="HOGENOM" id="CLU_057426_1_1_6"/>
<dbReference type="UniPathway" id="UPA00148">
    <property type="reaction ID" value="UER00238"/>
</dbReference>
<dbReference type="GO" id="GO:0005886">
    <property type="term" value="C:plasma membrane"/>
    <property type="evidence" value="ECO:0007669"/>
    <property type="project" value="UniProtKB-SubCell"/>
</dbReference>
<dbReference type="GO" id="GO:0051073">
    <property type="term" value="F:adenosylcobinamide-GDP ribazoletransferase activity"/>
    <property type="evidence" value="ECO:0007669"/>
    <property type="project" value="UniProtKB-UniRule"/>
</dbReference>
<dbReference type="GO" id="GO:0008818">
    <property type="term" value="F:cobalamin 5'-phosphate synthase activity"/>
    <property type="evidence" value="ECO:0007669"/>
    <property type="project" value="UniProtKB-UniRule"/>
</dbReference>
<dbReference type="GO" id="GO:0009236">
    <property type="term" value="P:cobalamin biosynthetic process"/>
    <property type="evidence" value="ECO:0007669"/>
    <property type="project" value="UniProtKB-UniRule"/>
</dbReference>
<dbReference type="HAMAP" id="MF_00719">
    <property type="entry name" value="CobS"/>
    <property type="match status" value="1"/>
</dbReference>
<dbReference type="InterPro" id="IPR003805">
    <property type="entry name" value="CobS"/>
</dbReference>
<dbReference type="NCBIfam" id="TIGR00317">
    <property type="entry name" value="cobS"/>
    <property type="match status" value="1"/>
</dbReference>
<dbReference type="NCBIfam" id="NF001277">
    <property type="entry name" value="PRK00235.1-3"/>
    <property type="match status" value="1"/>
</dbReference>
<dbReference type="PANTHER" id="PTHR34148">
    <property type="entry name" value="ADENOSYLCOBINAMIDE-GDP RIBAZOLETRANSFERASE"/>
    <property type="match status" value="1"/>
</dbReference>
<dbReference type="PANTHER" id="PTHR34148:SF1">
    <property type="entry name" value="ADENOSYLCOBINAMIDE-GDP RIBAZOLETRANSFERASE"/>
    <property type="match status" value="1"/>
</dbReference>
<dbReference type="Pfam" id="PF02654">
    <property type="entry name" value="CobS"/>
    <property type="match status" value="1"/>
</dbReference>
<keyword id="KW-0997">Cell inner membrane</keyword>
<keyword id="KW-1003">Cell membrane</keyword>
<keyword id="KW-0169">Cobalamin biosynthesis</keyword>
<keyword id="KW-0460">Magnesium</keyword>
<keyword id="KW-0472">Membrane</keyword>
<keyword id="KW-0808">Transferase</keyword>
<keyword id="KW-0812">Transmembrane</keyword>
<keyword id="KW-1133">Transmembrane helix</keyword>
<reference key="1">
    <citation type="submission" date="2007-04" db="EMBL/GenBank/DDBJ databases">
        <title>Complete sequence of Shewanella putrefaciens CN-32.</title>
        <authorList>
            <consortium name="US DOE Joint Genome Institute"/>
            <person name="Copeland A."/>
            <person name="Lucas S."/>
            <person name="Lapidus A."/>
            <person name="Barry K."/>
            <person name="Detter J.C."/>
            <person name="Glavina del Rio T."/>
            <person name="Hammon N."/>
            <person name="Israni S."/>
            <person name="Dalin E."/>
            <person name="Tice H."/>
            <person name="Pitluck S."/>
            <person name="Chain P."/>
            <person name="Malfatti S."/>
            <person name="Shin M."/>
            <person name="Vergez L."/>
            <person name="Schmutz J."/>
            <person name="Larimer F."/>
            <person name="Land M."/>
            <person name="Hauser L."/>
            <person name="Kyrpides N."/>
            <person name="Mikhailova N."/>
            <person name="Romine M.F."/>
            <person name="Fredrickson J."/>
            <person name="Tiedje J."/>
            <person name="Richardson P."/>
        </authorList>
    </citation>
    <scope>NUCLEOTIDE SEQUENCE [LARGE SCALE GENOMIC DNA]</scope>
    <source>
        <strain>CN-32 / ATCC BAA-453</strain>
    </source>
</reference>
<sequence length="262" mass="28662">MSERESWHKEIDLFLVAMGYFTRIPMPKWVEVDSDKLNKASRYFGLVGLLIGLLSAIVFWLTQNWLPAGVSVLLAMLVGVLLTGGFHEDGLADTFDGFGGGWTAEDKLRIMKDSRLGSYGAIALILALLLKWQLLVELALYDPVVAGSALIVAHTVSRVVAASIIFTEKYVRDDETSKSKPLSQHQGINELFILVASGVLVLLFLKGLAALSLLLVMIGLRRLIVVIFRRQIGGYTGDTLGAAQQICEIVCYLVLLIVGSIL</sequence>
<protein>
    <recommendedName>
        <fullName evidence="1">Adenosylcobinamide-GDP ribazoletransferase</fullName>
        <ecNumber evidence="1">2.7.8.26</ecNumber>
    </recommendedName>
    <alternativeName>
        <fullName evidence="1">Cobalamin synthase</fullName>
    </alternativeName>
    <alternativeName>
        <fullName evidence="1">Cobalamin-5'-phosphate synthase</fullName>
    </alternativeName>
</protein>
<gene>
    <name evidence="1" type="primary">cobS</name>
    <name type="ordered locus">Sputcn32_2960</name>
</gene>